<dbReference type="EMBL" id="AL513382">
    <property type="protein sequence ID" value="CAD08178.1"/>
    <property type="molecule type" value="Genomic_DNA"/>
</dbReference>
<dbReference type="EMBL" id="AE014613">
    <property type="protein sequence ID" value="AAO71537.1"/>
    <property type="molecule type" value="Genomic_DNA"/>
</dbReference>
<dbReference type="RefSeq" id="NP_458465.1">
    <property type="nucleotide sequence ID" value="NC_003198.1"/>
</dbReference>
<dbReference type="RefSeq" id="WP_000447529.1">
    <property type="nucleotide sequence ID" value="NZ_WSUR01000046.1"/>
</dbReference>
<dbReference type="SMR" id="P61178"/>
<dbReference type="STRING" id="220341.gene:17588191"/>
<dbReference type="GeneID" id="93778672"/>
<dbReference type="KEGG" id="stt:t4070"/>
<dbReference type="KEGG" id="sty:STY4363"/>
<dbReference type="PATRIC" id="fig|220341.7.peg.4459"/>
<dbReference type="eggNOG" id="COG0091">
    <property type="taxonomic scope" value="Bacteria"/>
</dbReference>
<dbReference type="HOGENOM" id="CLU_083987_3_3_6"/>
<dbReference type="OMA" id="KRIQPRA"/>
<dbReference type="OrthoDB" id="9805969at2"/>
<dbReference type="Proteomes" id="UP000000541">
    <property type="component" value="Chromosome"/>
</dbReference>
<dbReference type="Proteomes" id="UP000002670">
    <property type="component" value="Chromosome"/>
</dbReference>
<dbReference type="GO" id="GO:0022625">
    <property type="term" value="C:cytosolic large ribosomal subunit"/>
    <property type="evidence" value="ECO:0007669"/>
    <property type="project" value="TreeGrafter"/>
</dbReference>
<dbReference type="GO" id="GO:0019843">
    <property type="term" value="F:rRNA binding"/>
    <property type="evidence" value="ECO:0007669"/>
    <property type="project" value="UniProtKB-UniRule"/>
</dbReference>
<dbReference type="GO" id="GO:0003735">
    <property type="term" value="F:structural constituent of ribosome"/>
    <property type="evidence" value="ECO:0007669"/>
    <property type="project" value="InterPro"/>
</dbReference>
<dbReference type="GO" id="GO:0006412">
    <property type="term" value="P:translation"/>
    <property type="evidence" value="ECO:0007669"/>
    <property type="project" value="UniProtKB-UniRule"/>
</dbReference>
<dbReference type="CDD" id="cd00336">
    <property type="entry name" value="Ribosomal_L22"/>
    <property type="match status" value="1"/>
</dbReference>
<dbReference type="FunFam" id="3.90.470.10:FF:000001">
    <property type="entry name" value="50S ribosomal protein L22"/>
    <property type="match status" value="1"/>
</dbReference>
<dbReference type="Gene3D" id="3.90.470.10">
    <property type="entry name" value="Ribosomal protein L22/L17"/>
    <property type="match status" value="1"/>
</dbReference>
<dbReference type="HAMAP" id="MF_01331_B">
    <property type="entry name" value="Ribosomal_uL22_B"/>
    <property type="match status" value="1"/>
</dbReference>
<dbReference type="InterPro" id="IPR001063">
    <property type="entry name" value="Ribosomal_uL22"/>
</dbReference>
<dbReference type="InterPro" id="IPR005727">
    <property type="entry name" value="Ribosomal_uL22_bac/chlpt-type"/>
</dbReference>
<dbReference type="InterPro" id="IPR047867">
    <property type="entry name" value="Ribosomal_uL22_bac/org-type"/>
</dbReference>
<dbReference type="InterPro" id="IPR018260">
    <property type="entry name" value="Ribosomal_uL22_CS"/>
</dbReference>
<dbReference type="InterPro" id="IPR036394">
    <property type="entry name" value="Ribosomal_uL22_sf"/>
</dbReference>
<dbReference type="NCBIfam" id="TIGR01044">
    <property type="entry name" value="rplV_bact"/>
    <property type="match status" value="1"/>
</dbReference>
<dbReference type="PANTHER" id="PTHR13501">
    <property type="entry name" value="CHLOROPLAST 50S RIBOSOMAL PROTEIN L22-RELATED"/>
    <property type="match status" value="1"/>
</dbReference>
<dbReference type="PANTHER" id="PTHR13501:SF8">
    <property type="entry name" value="LARGE RIBOSOMAL SUBUNIT PROTEIN UL22M"/>
    <property type="match status" value="1"/>
</dbReference>
<dbReference type="Pfam" id="PF00237">
    <property type="entry name" value="Ribosomal_L22"/>
    <property type="match status" value="1"/>
</dbReference>
<dbReference type="SUPFAM" id="SSF54843">
    <property type="entry name" value="Ribosomal protein L22"/>
    <property type="match status" value="1"/>
</dbReference>
<dbReference type="PROSITE" id="PS00464">
    <property type="entry name" value="RIBOSOMAL_L22"/>
    <property type="match status" value="1"/>
</dbReference>
<proteinExistence type="inferred from homology"/>
<evidence type="ECO:0000255" key="1">
    <source>
        <dbReference type="HAMAP-Rule" id="MF_01331"/>
    </source>
</evidence>
<evidence type="ECO:0000305" key="2"/>
<organism>
    <name type="scientific">Salmonella typhi</name>
    <dbReference type="NCBI Taxonomy" id="90370"/>
    <lineage>
        <taxon>Bacteria</taxon>
        <taxon>Pseudomonadati</taxon>
        <taxon>Pseudomonadota</taxon>
        <taxon>Gammaproteobacteria</taxon>
        <taxon>Enterobacterales</taxon>
        <taxon>Enterobacteriaceae</taxon>
        <taxon>Salmonella</taxon>
    </lineage>
</organism>
<reference key="1">
    <citation type="journal article" date="2001" name="Nature">
        <title>Complete genome sequence of a multiple drug resistant Salmonella enterica serovar Typhi CT18.</title>
        <authorList>
            <person name="Parkhill J."/>
            <person name="Dougan G."/>
            <person name="James K.D."/>
            <person name="Thomson N.R."/>
            <person name="Pickard D."/>
            <person name="Wain J."/>
            <person name="Churcher C.M."/>
            <person name="Mungall K.L."/>
            <person name="Bentley S.D."/>
            <person name="Holden M.T.G."/>
            <person name="Sebaihia M."/>
            <person name="Baker S."/>
            <person name="Basham D."/>
            <person name="Brooks K."/>
            <person name="Chillingworth T."/>
            <person name="Connerton P."/>
            <person name="Cronin A."/>
            <person name="Davis P."/>
            <person name="Davies R.M."/>
            <person name="Dowd L."/>
            <person name="White N."/>
            <person name="Farrar J."/>
            <person name="Feltwell T."/>
            <person name="Hamlin N."/>
            <person name="Haque A."/>
            <person name="Hien T.T."/>
            <person name="Holroyd S."/>
            <person name="Jagels K."/>
            <person name="Krogh A."/>
            <person name="Larsen T.S."/>
            <person name="Leather S."/>
            <person name="Moule S."/>
            <person name="O'Gaora P."/>
            <person name="Parry C."/>
            <person name="Quail M.A."/>
            <person name="Rutherford K.M."/>
            <person name="Simmonds M."/>
            <person name="Skelton J."/>
            <person name="Stevens K."/>
            <person name="Whitehead S."/>
            <person name="Barrell B.G."/>
        </authorList>
    </citation>
    <scope>NUCLEOTIDE SEQUENCE [LARGE SCALE GENOMIC DNA]</scope>
    <source>
        <strain>CT18</strain>
    </source>
</reference>
<reference key="2">
    <citation type="journal article" date="2003" name="J. Bacteriol.">
        <title>Comparative genomics of Salmonella enterica serovar Typhi strains Ty2 and CT18.</title>
        <authorList>
            <person name="Deng W."/>
            <person name="Liou S.-R."/>
            <person name="Plunkett G. III"/>
            <person name="Mayhew G.F."/>
            <person name="Rose D.J."/>
            <person name="Burland V."/>
            <person name="Kodoyianni V."/>
            <person name="Schwartz D.C."/>
            <person name="Blattner F.R."/>
        </authorList>
    </citation>
    <scope>NUCLEOTIDE SEQUENCE [LARGE SCALE GENOMIC DNA]</scope>
    <source>
        <strain>ATCC 700931 / Ty2</strain>
    </source>
</reference>
<gene>
    <name evidence="1" type="primary">rplV</name>
    <name type="ordered locus">STY4363</name>
    <name type="ordered locus">t4070</name>
</gene>
<feature type="chain" id="PRO_0000125215" description="Large ribosomal subunit protein uL22">
    <location>
        <begin position="1"/>
        <end position="110"/>
    </location>
</feature>
<keyword id="KW-0687">Ribonucleoprotein</keyword>
<keyword id="KW-0689">Ribosomal protein</keyword>
<keyword id="KW-0694">RNA-binding</keyword>
<keyword id="KW-0699">rRNA-binding</keyword>
<name>RL22_SALTI</name>
<sequence>METIAKHRHARSSAQKVRLVADLIRGKKVSQALDILTYTNKKAAVLVKKVLESAIANAEHNDGADIDDLKVTKIFVDEGPSMKRIMPRAKGRADRILKRTSHITVVVSDR</sequence>
<protein>
    <recommendedName>
        <fullName evidence="1">Large ribosomal subunit protein uL22</fullName>
    </recommendedName>
    <alternativeName>
        <fullName evidence="2">50S ribosomal protein L22</fullName>
    </alternativeName>
</protein>
<accession>P61178</accession>
<accession>P02423</accession>
<comment type="function">
    <text evidence="1">This protein binds specifically to 23S rRNA; its binding is stimulated by other ribosomal proteins, e.g. L4, L17, and L20. It is important during the early stages of 50S assembly. It makes multiple contacts with different domains of the 23S rRNA in the assembled 50S subunit and ribosome (By similarity).</text>
</comment>
<comment type="function">
    <text evidence="1">The globular domain of the protein is located near the polypeptide exit tunnel on the outside of the subunit, while an extended beta-hairpin is found that lines the wall of the exit tunnel in the center of the 70S ribosome.</text>
</comment>
<comment type="subunit">
    <text evidence="1">Part of the 50S ribosomal subunit.</text>
</comment>
<comment type="similarity">
    <text evidence="1">Belongs to the universal ribosomal protein uL22 family.</text>
</comment>